<keyword id="KW-0002">3D-structure</keyword>
<keyword id="KW-0067">ATP-binding</keyword>
<keyword id="KW-1003">Cell membrane</keyword>
<keyword id="KW-0378">Hydrolase</keyword>
<keyword id="KW-0472">Membrane</keyword>
<keyword id="KW-0547">Nucleotide-binding</keyword>
<keyword id="KW-0645">Protease</keyword>
<keyword id="KW-1185">Reference proteome</keyword>
<keyword id="KW-0720">Serine protease</keyword>
<keyword id="KW-0812">Transmembrane</keyword>
<keyword id="KW-1133">Transmembrane helix</keyword>
<comment type="function">
    <text evidence="1 4">ATP-dependent serine protease that mediates the selective degradation of mutant and abnormal proteins as well as certain short-lived regulatory proteins. Degrades polypeptides processively (By similarity).</text>
</comment>
<comment type="subunit">
    <text evidence="1">Homohexamer. Organized in a ring with a central cavity (By similarity).</text>
</comment>
<comment type="subcellular location">
    <subcellularLocation>
        <location evidence="1">Cell membrane</location>
        <topology evidence="5">Multi-pass membrane protein</topology>
    </subcellularLocation>
</comment>
<comment type="similarity">
    <text evidence="5">Belongs to the peptidase S16 family. Archaeal LonB subfamily.</text>
</comment>
<reference key="1">
    <citation type="journal article" date="1997" name="Nature">
        <title>The complete genome sequence of the hyperthermophilic, sulphate-reducing archaeon Archaeoglobus fulgidus.</title>
        <authorList>
            <person name="Klenk H.-P."/>
            <person name="Clayton R.A."/>
            <person name="Tomb J.-F."/>
            <person name="White O."/>
            <person name="Nelson K.E."/>
            <person name="Ketchum K.A."/>
            <person name="Dodson R.J."/>
            <person name="Gwinn M.L."/>
            <person name="Hickey E.K."/>
            <person name="Peterson J.D."/>
            <person name="Richardson D.L."/>
            <person name="Kerlavage A.R."/>
            <person name="Graham D.E."/>
            <person name="Kyrpides N.C."/>
            <person name="Fleischmann R.D."/>
            <person name="Quackenbush J."/>
            <person name="Lee N.H."/>
            <person name="Sutton G.G."/>
            <person name="Gill S.R."/>
            <person name="Kirkness E.F."/>
            <person name="Dougherty B.A."/>
            <person name="McKenney K."/>
            <person name="Adams M.D."/>
            <person name="Loftus B.J."/>
            <person name="Peterson S.N."/>
            <person name="Reich C.I."/>
            <person name="McNeil L.K."/>
            <person name="Badger J.H."/>
            <person name="Glodek A."/>
            <person name="Zhou L."/>
            <person name="Overbeek R."/>
            <person name="Gocayne J.D."/>
            <person name="Weidman J.F."/>
            <person name="McDonald L.A."/>
            <person name="Utterback T.R."/>
            <person name="Cotton M.D."/>
            <person name="Spriggs T."/>
            <person name="Artiach P."/>
            <person name="Kaine B.P."/>
            <person name="Sykes S.M."/>
            <person name="Sadow P.W."/>
            <person name="D'Andrea K.P."/>
            <person name="Bowman C."/>
            <person name="Fujii C."/>
            <person name="Garland S.A."/>
            <person name="Mason T.M."/>
            <person name="Olsen G.J."/>
            <person name="Fraser C.M."/>
            <person name="Smith H.O."/>
            <person name="Woese C.R."/>
            <person name="Venter J.C."/>
        </authorList>
    </citation>
    <scope>NUCLEOTIDE SEQUENCE [LARGE SCALE GENOMIC DNA]</scope>
    <source>
        <strain>ATCC 49558 / DSM 4304 / JCM 9628 / NBRC 100126 / VC-16</strain>
    </source>
</reference>
<reference key="2">
    <citation type="journal article" date="2005" name="J. Mol. Biol.">
        <title>Atomic-resolution crystal structure of the proteolytic domain of Archaeoglobus fulgidus lon reveals the conformational variability in the active sites of lon proteases.</title>
        <authorList>
            <person name="Botos I."/>
            <person name="Melnikov E.E."/>
            <person name="Cherry S."/>
            <person name="Kozlov S."/>
            <person name="Makhovskaya O.V."/>
            <person name="Tropea J.E."/>
            <person name="Gustchina A."/>
            <person name="Rotanova T.V."/>
            <person name="Wlodawer A."/>
        </authorList>
    </citation>
    <scope>X-RAY CRYSTALLOGRAPHY (1.2 ANGSTROMS) OF 415-621 OF WILD TYPE AND MUTANTS ALA-506 AND ALA-508</scope>
    <scope>FUNCTION</scope>
    <scope>MUTAGENESIS OF SER-509</scope>
</reference>
<organism>
    <name type="scientific">Archaeoglobus fulgidus (strain ATCC 49558 / DSM 4304 / JCM 9628 / NBRC 100126 / VC-16)</name>
    <dbReference type="NCBI Taxonomy" id="224325"/>
    <lineage>
        <taxon>Archaea</taxon>
        <taxon>Methanobacteriati</taxon>
        <taxon>Methanobacteriota</taxon>
        <taxon>Archaeoglobi</taxon>
        <taxon>Archaeoglobales</taxon>
        <taxon>Archaeoglobaceae</taxon>
        <taxon>Archaeoglobus</taxon>
    </lineage>
</organism>
<name>LONB_ARCFU</name>
<protein>
    <recommendedName>
        <fullName>Archaeal Lon protease</fullName>
        <ecNumber>3.4.21.-</ecNumber>
    </recommendedName>
    <alternativeName>
        <fullName>ATP-dependent protease La homolog</fullName>
    </alternativeName>
</protein>
<proteinExistence type="evidence at protein level"/>
<accession>O29883</accession>
<sequence length="621" mass="68208">MNEEVREILGGLDFESTKDVAVPERLIDQVIGQDHAVEAIKKAAVQKRHVMLIGSPGTGKSMLAKAMAELLPKEELEDILVYPNPQDPNQPKIRLVPAGKGREIVEAYKEEAMKKAQARNFLIFTLVFLVIGYTVLTNPGNLIWGIIAAVLILMMSRYFIPREDRNVPKLLVDNSDKVTAPFEDATGAHAGALFGDVRHDPFQSGGLETPAHERVEAGAIHRAHKGVLYIDEINTLTIESQQKLLTALQDKKFPITGQSERSSGAMVRTEPVPCDFILVAAGNLDALMGMHPALRSRIEGYGYEVYMNDTMPDTPENRQKLVRFVAQEVVKDGKIPHFDKYAVAEIIKEARRRAGRRNHLTLRLRELGGLVRTAGDIAKSEGSDIVRLEHVLKAKKIAKTIEEQLADKYIERRKDYKLFITEGYEVGRVNGLAVIGESAGIVLPIIAEVTPSMSKSEGRVIATGRLQEIAREAVMNVSAIIKKYTGRDISNMDVHIQFVGTYEGVEGDSASISIATAVISAIEGIPVDQSVAMTGSLSVKGEVLPVGGVTQKIEAAIQAGLKKVIIPKDNIDDVLLDAEHEGKIEVIPVSRINEVLEHVLEDGKKKNRLMSKFKELELAAV</sequence>
<feature type="chain" id="PRO_0000076151" description="Archaeal Lon protease">
    <location>
        <begin position="1"/>
        <end position="621"/>
    </location>
</feature>
<feature type="topological domain" description="Cytoplasmic" evidence="2">
    <location>
        <begin position="1"/>
        <end position="117"/>
    </location>
</feature>
<feature type="transmembrane region" description="Helical" evidence="2">
    <location>
        <begin position="118"/>
        <end position="136"/>
    </location>
</feature>
<feature type="topological domain" description="Extracellular" evidence="2">
    <location>
        <begin position="137"/>
        <end position="141"/>
    </location>
</feature>
<feature type="transmembrane region" description="Helical" evidence="2">
    <location>
        <begin position="142"/>
        <end position="160"/>
    </location>
</feature>
<feature type="topological domain" description="Cytoplasmic" evidence="2">
    <location>
        <begin position="161"/>
        <end position="621"/>
    </location>
</feature>
<feature type="domain" description="Lon proteolytic" evidence="3">
    <location>
        <begin position="423"/>
        <end position="602"/>
    </location>
</feature>
<feature type="active site" evidence="3">
    <location>
        <position position="509"/>
    </location>
</feature>
<feature type="active site" evidence="3">
    <location>
        <position position="552"/>
    </location>
</feature>
<feature type="binding site" evidence="2">
    <location>
        <begin position="54"/>
        <end position="61"/>
    </location>
    <ligand>
        <name>ATP</name>
        <dbReference type="ChEBI" id="CHEBI:30616"/>
    </ligand>
</feature>
<feature type="mutagenesis site" description="Slightly decreases proteolytic activity.">
    <original>E</original>
    <variation>A</variation>
    <location>
        <position position="506"/>
    </location>
</feature>
<feature type="mutagenesis site" description="No effect.">
    <original>D</original>
    <variation>A</variation>
    <location>
        <position position="508"/>
    </location>
</feature>
<feature type="mutagenesis site" description="Completely abolishes proteolytic activity." evidence="4">
    <original>S</original>
    <variation>A</variation>
    <location>
        <position position="509"/>
    </location>
</feature>
<feature type="strand" evidence="7">
    <location>
        <begin position="422"/>
        <end position="425"/>
    </location>
</feature>
<feature type="strand" evidence="7">
    <location>
        <begin position="428"/>
        <end position="435"/>
    </location>
</feature>
<feature type="turn" evidence="7">
    <location>
        <begin position="436"/>
        <end position="438"/>
    </location>
</feature>
<feature type="strand" evidence="7">
    <location>
        <begin position="439"/>
        <end position="451"/>
    </location>
</feature>
<feature type="helix" evidence="7">
    <location>
        <begin position="467"/>
        <end position="485"/>
    </location>
</feature>
<feature type="helix" evidence="7">
    <location>
        <begin position="489"/>
        <end position="491"/>
    </location>
</feature>
<feature type="strand" evidence="7">
    <location>
        <begin position="492"/>
        <end position="500"/>
    </location>
</feature>
<feature type="strand" evidence="6">
    <location>
        <begin position="503"/>
        <end position="506"/>
    </location>
</feature>
<feature type="helix" evidence="7">
    <location>
        <begin position="512"/>
        <end position="523"/>
    </location>
</feature>
<feature type="strand" evidence="7">
    <location>
        <begin position="531"/>
        <end position="533"/>
    </location>
</feature>
<feature type="strand" evidence="7">
    <location>
        <begin position="541"/>
        <end position="544"/>
    </location>
</feature>
<feature type="helix" evidence="7">
    <location>
        <begin position="549"/>
        <end position="558"/>
    </location>
</feature>
<feature type="strand" evidence="7">
    <location>
        <begin position="562"/>
        <end position="567"/>
    </location>
</feature>
<feature type="helix" evidence="7">
    <location>
        <begin position="568"/>
        <end position="573"/>
    </location>
</feature>
<feature type="turn" evidence="7">
    <location>
        <begin position="578"/>
        <end position="582"/>
    </location>
</feature>
<feature type="strand" evidence="7">
    <location>
        <begin position="583"/>
        <end position="591"/>
    </location>
</feature>
<feature type="helix" evidence="7">
    <location>
        <begin position="592"/>
        <end position="599"/>
    </location>
</feature>
<feature type="helix" evidence="7">
    <location>
        <begin position="604"/>
        <end position="620"/>
    </location>
</feature>
<dbReference type="EC" id="3.4.21.-"/>
<dbReference type="EMBL" id="AE000782">
    <property type="protein sequence ID" value="AAB90868.1"/>
    <property type="molecule type" value="Genomic_DNA"/>
</dbReference>
<dbReference type="PIR" id="D69295">
    <property type="entry name" value="D69295"/>
</dbReference>
<dbReference type="RefSeq" id="WP_010877871.1">
    <property type="nucleotide sequence ID" value="NC_000917.1"/>
</dbReference>
<dbReference type="PDB" id="1Z0B">
    <property type="method" value="X-ray"/>
    <property type="resolution" value="1.55 A"/>
    <property type="chains" value="A=415-621"/>
</dbReference>
<dbReference type="PDB" id="1Z0C">
    <property type="method" value="X-ray"/>
    <property type="resolution" value="1.55 A"/>
    <property type="chains" value="A=415-621"/>
</dbReference>
<dbReference type="PDB" id="1Z0E">
    <property type="method" value="X-ray"/>
    <property type="resolution" value="2.05 A"/>
    <property type="chains" value="A/B/C/D/E/F=417-621"/>
</dbReference>
<dbReference type="PDB" id="1Z0G">
    <property type="method" value="X-ray"/>
    <property type="resolution" value="2.27 A"/>
    <property type="chains" value="A/B/C/D/E/F=417-621"/>
</dbReference>
<dbReference type="PDB" id="1Z0T">
    <property type="method" value="X-ray"/>
    <property type="resolution" value="3.00 A"/>
    <property type="chains" value="A/B/C/D/E/F=417-621"/>
</dbReference>
<dbReference type="PDB" id="1Z0V">
    <property type="method" value="X-ray"/>
    <property type="resolution" value="3.00 A"/>
    <property type="chains" value="A/B/C/D/E/F=417-621"/>
</dbReference>
<dbReference type="PDB" id="1Z0W">
    <property type="method" value="X-ray"/>
    <property type="resolution" value="1.20 A"/>
    <property type="chains" value="A=415-621"/>
</dbReference>
<dbReference type="PDBsum" id="1Z0B"/>
<dbReference type="PDBsum" id="1Z0C"/>
<dbReference type="PDBsum" id="1Z0E"/>
<dbReference type="PDBsum" id="1Z0G"/>
<dbReference type="PDBsum" id="1Z0T"/>
<dbReference type="PDBsum" id="1Z0V"/>
<dbReference type="PDBsum" id="1Z0W"/>
<dbReference type="SMR" id="O29883"/>
<dbReference type="STRING" id="224325.AF_0364"/>
<dbReference type="MEROPS" id="S16.005"/>
<dbReference type="PaxDb" id="224325-AF_0364"/>
<dbReference type="EnsemblBacteria" id="AAB90868">
    <property type="protein sequence ID" value="AAB90868"/>
    <property type="gene ID" value="AF_0364"/>
</dbReference>
<dbReference type="GeneID" id="1483579"/>
<dbReference type="KEGG" id="afu:AF_0364"/>
<dbReference type="eggNOG" id="arCOG02160">
    <property type="taxonomic scope" value="Archaea"/>
</dbReference>
<dbReference type="HOGENOM" id="CLU_392630_0_0_2"/>
<dbReference type="OrthoDB" id="64652at2157"/>
<dbReference type="PhylomeDB" id="O29883"/>
<dbReference type="BRENDA" id="3.4.21.53">
    <property type="organism ID" value="414"/>
</dbReference>
<dbReference type="EvolutionaryTrace" id="O29883"/>
<dbReference type="Proteomes" id="UP000002199">
    <property type="component" value="Chromosome"/>
</dbReference>
<dbReference type="GO" id="GO:0005886">
    <property type="term" value="C:plasma membrane"/>
    <property type="evidence" value="ECO:0007669"/>
    <property type="project" value="UniProtKB-SubCell"/>
</dbReference>
<dbReference type="GO" id="GO:0005524">
    <property type="term" value="F:ATP binding"/>
    <property type="evidence" value="ECO:0007669"/>
    <property type="project" value="UniProtKB-KW"/>
</dbReference>
<dbReference type="GO" id="GO:0016887">
    <property type="term" value="F:ATP hydrolysis activity"/>
    <property type="evidence" value="ECO:0007669"/>
    <property type="project" value="InterPro"/>
</dbReference>
<dbReference type="GO" id="GO:0004176">
    <property type="term" value="F:ATP-dependent peptidase activity"/>
    <property type="evidence" value="ECO:0007669"/>
    <property type="project" value="InterPro"/>
</dbReference>
<dbReference type="GO" id="GO:0004252">
    <property type="term" value="F:serine-type endopeptidase activity"/>
    <property type="evidence" value="ECO:0007669"/>
    <property type="project" value="InterPro"/>
</dbReference>
<dbReference type="GO" id="GO:0030163">
    <property type="term" value="P:protein catabolic process"/>
    <property type="evidence" value="ECO:0007669"/>
    <property type="project" value="InterPro"/>
</dbReference>
<dbReference type="GO" id="GO:0006508">
    <property type="term" value="P:proteolysis"/>
    <property type="evidence" value="ECO:0007669"/>
    <property type="project" value="UniProtKB-KW"/>
</dbReference>
<dbReference type="GO" id="GO:0006355">
    <property type="term" value="P:regulation of DNA-templated transcription"/>
    <property type="evidence" value="ECO:0007669"/>
    <property type="project" value="InterPro"/>
</dbReference>
<dbReference type="CDD" id="cd00009">
    <property type="entry name" value="AAA"/>
    <property type="match status" value="1"/>
</dbReference>
<dbReference type="Gene3D" id="1.10.8.60">
    <property type="match status" value="1"/>
</dbReference>
<dbReference type="Gene3D" id="3.30.230.10">
    <property type="match status" value="1"/>
</dbReference>
<dbReference type="Gene3D" id="3.40.50.300">
    <property type="entry name" value="P-loop containing nucleotide triphosphate hydrolases"/>
    <property type="match status" value="2"/>
</dbReference>
<dbReference type="InterPro" id="IPR003593">
    <property type="entry name" value="AAA+_ATPase"/>
</dbReference>
<dbReference type="InterPro" id="IPR004663">
    <property type="entry name" value="Lon_arc"/>
</dbReference>
<dbReference type="InterPro" id="IPR008269">
    <property type="entry name" value="Lon_proteolytic"/>
</dbReference>
<dbReference type="InterPro" id="IPR027065">
    <property type="entry name" value="Lon_Prtase"/>
</dbReference>
<dbReference type="InterPro" id="IPR046843">
    <property type="entry name" value="LonB_AAA-LID"/>
</dbReference>
<dbReference type="InterPro" id="IPR000523">
    <property type="entry name" value="Mg_chelatse_chII-like_cat_dom"/>
</dbReference>
<dbReference type="InterPro" id="IPR027417">
    <property type="entry name" value="P-loop_NTPase"/>
</dbReference>
<dbReference type="InterPro" id="IPR020568">
    <property type="entry name" value="Ribosomal_Su5_D2-typ_SF"/>
</dbReference>
<dbReference type="InterPro" id="IPR014721">
    <property type="entry name" value="Ribsml_uS5_D2-typ_fold_subgr"/>
</dbReference>
<dbReference type="InterPro" id="IPR002078">
    <property type="entry name" value="Sigma_54_int"/>
</dbReference>
<dbReference type="NCBIfam" id="TIGR00764">
    <property type="entry name" value="lon_rel"/>
    <property type="match status" value="1"/>
</dbReference>
<dbReference type="PANTHER" id="PTHR10046">
    <property type="entry name" value="ATP DEPENDENT LON PROTEASE FAMILY MEMBER"/>
    <property type="match status" value="1"/>
</dbReference>
<dbReference type="Pfam" id="PF05362">
    <property type="entry name" value="Lon_C"/>
    <property type="match status" value="1"/>
</dbReference>
<dbReference type="Pfam" id="PF20436">
    <property type="entry name" value="LonB_AAA-LID"/>
    <property type="match status" value="1"/>
</dbReference>
<dbReference type="Pfam" id="PF01078">
    <property type="entry name" value="Mg_chelatase"/>
    <property type="match status" value="1"/>
</dbReference>
<dbReference type="Pfam" id="PF00158">
    <property type="entry name" value="Sigma54_activat"/>
    <property type="match status" value="1"/>
</dbReference>
<dbReference type="PRINTS" id="PR00830">
    <property type="entry name" value="ENDOLAPTASE"/>
</dbReference>
<dbReference type="SMART" id="SM00382">
    <property type="entry name" value="AAA"/>
    <property type="match status" value="1"/>
</dbReference>
<dbReference type="SUPFAM" id="SSF52540">
    <property type="entry name" value="P-loop containing nucleoside triphosphate hydrolases"/>
    <property type="match status" value="1"/>
</dbReference>
<dbReference type="SUPFAM" id="SSF54211">
    <property type="entry name" value="Ribosomal protein S5 domain 2-like"/>
    <property type="match status" value="1"/>
</dbReference>
<dbReference type="PROSITE" id="PS51786">
    <property type="entry name" value="LON_PROTEOLYTIC"/>
    <property type="match status" value="1"/>
</dbReference>
<gene>
    <name type="ordered locus">AF_0364</name>
</gene>
<evidence type="ECO:0000250" key="1"/>
<evidence type="ECO:0000255" key="2"/>
<evidence type="ECO:0000255" key="3">
    <source>
        <dbReference type="PROSITE-ProRule" id="PRU01122"/>
    </source>
</evidence>
<evidence type="ECO:0000269" key="4">
    <source>
    </source>
</evidence>
<evidence type="ECO:0000305" key="5"/>
<evidence type="ECO:0007829" key="6">
    <source>
        <dbReference type="PDB" id="1Z0G"/>
    </source>
</evidence>
<evidence type="ECO:0007829" key="7">
    <source>
        <dbReference type="PDB" id="1Z0W"/>
    </source>
</evidence>